<gene>
    <name evidence="1" type="primary">queA</name>
    <name type="ordered locus">SSON_0382</name>
</gene>
<comment type="function">
    <text evidence="1">Transfers and isomerizes the ribose moiety from AdoMet to the 7-aminomethyl group of 7-deazaguanine (preQ1-tRNA) to give epoxyqueuosine (oQ-tRNA).</text>
</comment>
<comment type="catalytic activity">
    <reaction evidence="1">
        <text>7-aminomethyl-7-carbaguanosine(34) in tRNA + S-adenosyl-L-methionine = epoxyqueuosine(34) in tRNA + adenine + L-methionine + 2 H(+)</text>
        <dbReference type="Rhea" id="RHEA:32155"/>
        <dbReference type="Rhea" id="RHEA-COMP:10342"/>
        <dbReference type="Rhea" id="RHEA-COMP:18582"/>
        <dbReference type="ChEBI" id="CHEBI:15378"/>
        <dbReference type="ChEBI" id="CHEBI:16708"/>
        <dbReference type="ChEBI" id="CHEBI:57844"/>
        <dbReference type="ChEBI" id="CHEBI:59789"/>
        <dbReference type="ChEBI" id="CHEBI:82833"/>
        <dbReference type="ChEBI" id="CHEBI:194443"/>
        <dbReference type="EC" id="2.4.99.17"/>
    </reaction>
</comment>
<comment type="pathway">
    <text evidence="1">tRNA modification; tRNA-queuosine biosynthesis.</text>
</comment>
<comment type="subunit">
    <text evidence="1">Monomer.</text>
</comment>
<comment type="subcellular location">
    <subcellularLocation>
        <location evidence="1">Cytoplasm</location>
    </subcellularLocation>
</comment>
<comment type="similarity">
    <text evidence="1">Belongs to the QueA family.</text>
</comment>
<organism>
    <name type="scientific">Shigella sonnei (strain Ss046)</name>
    <dbReference type="NCBI Taxonomy" id="300269"/>
    <lineage>
        <taxon>Bacteria</taxon>
        <taxon>Pseudomonadati</taxon>
        <taxon>Pseudomonadota</taxon>
        <taxon>Gammaproteobacteria</taxon>
        <taxon>Enterobacterales</taxon>
        <taxon>Enterobacteriaceae</taxon>
        <taxon>Shigella</taxon>
    </lineage>
</organism>
<reference key="1">
    <citation type="journal article" date="2005" name="Nucleic Acids Res.">
        <title>Genome dynamics and diversity of Shigella species, the etiologic agents of bacillary dysentery.</title>
        <authorList>
            <person name="Yang F."/>
            <person name="Yang J."/>
            <person name="Zhang X."/>
            <person name="Chen L."/>
            <person name="Jiang Y."/>
            <person name="Yan Y."/>
            <person name="Tang X."/>
            <person name="Wang J."/>
            <person name="Xiong Z."/>
            <person name="Dong J."/>
            <person name="Xue Y."/>
            <person name="Zhu Y."/>
            <person name="Xu X."/>
            <person name="Sun L."/>
            <person name="Chen S."/>
            <person name="Nie H."/>
            <person name="Peng J."/>
            <person name="Xu J."/>
            <person name="Wang Y."/>
            <person name="Yuan Z."/>
            <person name="Wen Y."/>
            <person name="Yao Z."/>
            <person name="Shen Y."/>
            <person name="Qiang B."/>
            <person name="Hou Y."/>
            <person name="Yu J."/>
            <person name="Jin Q."/>
        </authorList>
    </citation>
    <scope>NUCLEOTIDE SEQUENCE [LARGE SCALE GENOMIC DNA]</scope>
    <source>
        <strain>Ss046</strain>
    </source>
</reference>
<proteinExistence type="inferred from homology"/>
<evidence type="ECO:0000255" key="1">
    <source>
        <dbReference type="HAMAP-Rule" id="MF_00113"/>
    </source>
</evidence>
<name>QUEA_SHISS</name>
<accession>Q3Z504</accession>
<sequence>MRVTDFSFELPESLIAHYPMPERSSCRLLSLDGPTGALTHGTFTDLLDKLNPGDLLVFNNTRVIPARLFGRKASGGKIEVLVERMLDDKRILAHIRASKAPKPGAELLLGDDESINATMTARHGALFEVEFNDERSVLDILNSIGHMPLPPYIDRPDEDADRELYQTVYSEKPGAVAAPTAGLHFDEPLLEKLRAKGVEMAFVTLHVGAGTFQPVRVDTIEDHIMHSEYAEVPQDVVDAVLAAKARGNRVIAVGTTSVRSLESAAQAAKNDLIEPFFDDTQIFIYPGFQYKVVDALVTNFHLPESTLIMLVSAFAGYQHTMNAYKAAVEEKYRFFSYGDAMFITYNPQAINERVGE</sequence>
<keyword id="KW-0963">Cytoplasm</keyword>
<keyword id="KW-0671">Queuosine biosynthesis</keyword>
<keyword id="KW-1185">Reference proteome</keyword>
<keyword id="KW-0949">S-adenosyl-L-methionine</keyword>
<keyword id="KW-0808">Transferase</keyword>
<protein>
    <recommendedName>
        <fullName evidence="1">S-adenosylmethionine:tRNA ribosyltransferase-isomerase</fullName>
        <ecNumber evidence="1">2.4.99.17</ecNumber>
    </recommendedName>
    <alternativeName>
        <fullName evidence="1">Queuosine biosynthesis protein QueA</fullName>
    </alternativeName>
</protein>
<feature type="chain" id="PRO_0000231373" description="S-adenosylmethionine:tRNA ribosyltransferase-isomerase">
    <location>
        <begin position="1"/>
        <end position="356"/>
    </location>
</feature>
<dbReference type="EC" id="2.4.99.17" evidence="1"/>
<dbReference type="EMBL" id="CP000038">
    <property type="protein sequence ID" value="AAZ87158.1"/>
    <property type="molecule type" value="Genomic_DNA"/>
</dbReference>
<dbReference type="RefSeq" id="WP_001266503.1">
    <property type="nucleotide sequence ID" value="NC_007384.1"/>
</dbReference>
<dbReference type="SMR" id="Q3Z504"/>
<dbReference type="GeneID" id="93777055"/>
<dbReference type="KEGG" id="ssn:SSON_0382"/>
<dbReference type="HOGENOM" id="CLU_039110_1_0_6"/>
<dbReference type="UniPathway" id="UPA00392"/>
<dbReference type="Proteomes" id="UP000002529">
    <property type="component" value="Chromosome"/>
</dbReference>
<dbReference type="GO" id="GO:0005737">
    <property type="term" value="C:cytoplasm"/>
    <property type="evidence" value="ECO:0007669"/>
    <property type="project" value="UniProtKB-SubCell"/>
</dbReference>
<dbReference type="GO" id="GO:0051075">
    <property type="term" value="F:S-adenosylmethionine:tRNA ribosyltransferase-isomerase activity"/>
    <property type="evidence" value="ECO:0007669"/>
    <property type="project" value="UniProtKB-EC"/>
</dbReference>
<dbReference type="GO" id="GO:0008616">
    <property type="term" value="P:queuosine biosynthetic process"/>
    <property type="evidence" value="ECO:0007669"/>
    <property type="project" value="UniProtKB-UniRule"/>
</dbReference>
<dbReference type="GO" id="GO:0002099">
    <property type="term" value="P:tRNA wobble guanine modification"/>
    <property type="evidence" value="ECO:0007669"/>
    <property type="project" value="TreeGrafter"/>
</dbReference>
<dbReference type="FunFam" id="2.40.10.240:FF:000001">
    <property type="entry name" value="S-adenosylmethionine:tRNA ribosyltransferase-isomerase"/>
    <property type="match status" value="1"/>
</dbReference>
<dbReference type="FunFam" id="3.40.1780.10:FF:000001">
    <property type="entry name" value="S-adenosylmethionine:tRNA ribosyltransferase-isomerase"/>
    <property type="match status" value="1"/>
</dbReference>
<dbReference type="Gene3D" id="2.40.10.240">
    <property type="entry name" value="QueA-like"/>
    <property type="match status" value="1"/>
</dbReference>
<dbReference type="Gene3D" id="3.40.1780.10">
    <property type="entry name" value="QueA-like"/>
    <property type="match status" value="1"/>
</dbReference>
<dbReference type="HAMAP" id="MF_00113">
    <property type="entry name" value="QueA"/>
    <property type="match status" value="1"/>
</dbReference>
<dbReference type="InterPro" id="IPR003699">
    <property type="entry name" value="QueA"/>
</dbReference>
<dbReference type="InterPro" id="IPR042118">
    <property type="entry name" value="QueA_dom1"/>
</dbReference>
<dbReference type="InterPro" id="IPR042119">
    <property type="entry name" value="QueA_dom2"/>
</dbReference>
<dbReference type="InterPro" id="IPR036100">
    <property type="entry name" value="QueA_sf"/>
</dbReference>
<dbReference type="NCBIfam" id="NF001140">
    <property type="entry name" value="PRK00147.1"/>
    <property type="match status" value="1"/>
</dbReference>
<dbReference type="NCBIfam" id="TIGR00113">
    <property type="entry name" value="queA"/>
    <property type="match status" value="1"/>
</dbReference>
<dbReference type="PANTHER" id="PTHR30307">
    <property type="entry name" value="S-ADENOSYLMETHIONINE:TRNA RIBOSYLTRANSFERASE-ISOMERASE"/>
    <property type="match status" value="1"/>
</dbReference>
<dbReference type="PANTHER" id="PTHR30307:SF0">
    <property type="entry name" value="S-ADENOSYLMETHIONINE:TRNA RIBOSYLTRANSFERASE-ISOMERASE"/>
    <property type="match status" value="1"/>
</dbReference>
<dbReference type="Pfam" id="PF02547">
    <property type="entry name" value="Queuosine_synth"/>
    <property type="match status" value="1"/>
</dbReference>
<dbReference type="SUPFAM" id="SSF111337">
    <property type="entry name" value="QueA-like"/>
    <property type="match status" value="1"/>
</dbReference>